<sequence length="477" mass="54016">MCTGVRVRGITATAVSKILLDKGYRIVQASNIIRERFNLPLDTSPADVTVKDADKDELLVLGFYGHADKVYNDLVDELEYSFKWVSPVGLHSIHLGLIRDRVGDKCIVEIGNNVKGVLPRCNMDIGKKVLVGVAKAPIKPGEEALLTRSIRVVGKYVSIIYGKPSLTISEHIRDHDKREYLLAIAMSKIMGSGLGVHLRSSSQYAGKDEIEREIDELKQKLRELLDKAKHIEDAPTILYEGEFIGLIGLTSLAKEKLDSYRDKVVPTITRHHSLKSCDNVMSDIVDYSEILLRHGISRKIIYDALSDYILEKNRSLPKIRIIHIKPDGTTHTLSPGTIYEIVKSEKGVKIVLKRTLRNIGVYDGLGVEKKPGDIDYMVIEENSWIISHNYYRGNEWLGSYININTPPEILPGIIKYHDLLIDVIVKNTGEARIIDEEELKTYYEKEIIPEKLYEKALEVAKSILENHRLLIYRPNQQ</sequence>
<feature type="chain" id="PRO_0000334210" description="Probable ribonuclease FAU-1">
    <location>
        <begin position="1"/>
        <end position="477"/>
    </location>
</feature>
<dbReference type="EC" id="3.1.26.-" evidence="1"/>
<dbReference type="EMBL" id="CP000575">
    <property type="protein sequence ID" value="ABN69734.1"/>
    <property type="molecule type" value="Genomic_DNA"/>
</dbReference>
<dbReference type="RefSeq" id="WP_011838925.1">
    <property type="nucleotide sequence ID" value="NC_009033.1"/>
</dbReference>
<dbReference type="SMR" id="A3DM74"/>
<dbReference type="STRING" id="399550.Smar_0627"/>
<dbReference type="GeneID" id="4907112"/>
<dbReference type="KEGG" id="smr:Smar_0627"/>
<dbReference type="eggNOG" id="arCOG04307">
    <property type="taxonomic scope" value="Archaea"/>
</dbReference>
<dbReference type="HOGENOM" id="CLU_044303_0_0_2"/>
<dbReference type="OrthoDB" id="84798at2157"/>
<dbReference type="Proteomes" id="UP000000254">
    <property type="component" value="Chromosome"/>
</dbReference>
<dbReference type="GO" id="GO:0035925">
    <property type="term" value="F:mRNA 3'-UTR AU-rich region binding"/>
    <property type="evidence" value="ECO:0007669"/>
    <property type="project" value="UniProtKB-UniRule"/>
</dbReference>
<dbReference type="GO" id="GO:0016891">
    <property type="term" value="F:RNA endonuclease activity, producing 5'-phosphomonoesters"/>
    <property type="evidence" value="ECO:0007669"/>
    <property type="project" value="UniProtKB-UniRule"/>
</dbReference>
<dbReference type="GO" id="GO:0006364">
    <property type="term" value="P:rRNA processing"/>
    <property type="evidence" value="ECO:0007669"/>
    <property type="project" value="UniProtKB-UniRule"/>
</dbReference>
<dbReference type="Gene3D" id="2.40.380.10">
    <property type="entry name" value="FomD-like"/>
    <property type="match status" value="1"/>
</dbReference>
<dbReference type="HAMAP" id="MF_01910">
    <property type="entry name" value="RNA_binding_AU_1"/>
    <property type="match status" value="1"/>
</dbReference>
<dbReference type="InterPro" id="IPR007295">
    <property type="entry name" value="DUF402"/>
</dbReference>
<dbReference type="InterPro" id="IPR035930">
    <property type="entry name" value="FomD-like_sf"/>
</dbReference>
<dbReference type="InterPro" id="IPR050212">
    <property type="entry name" value="Ntdp-like"/>
</dbReference>
<dbReference type="InterPro" id="IPR019307">
    <property type="entry name" value="RNA-bd_AU-1/RNase_E/G"/>
</dbReference>
<dbReference type="InterPro" id="IPR016730">
    <property type="entry name" value="RNA-bd_FAU-1"/>
</dbReference>
<dbReference type="PANTHER" id="PTHR39159">
    <property type="match status" value="1"/>
</dbReference>
<dbReference type="PANTHER" id="PTHR39159:SF1">
    <property type="entry name" value="UPF0374 PROTEIN YGAC"/>
    <property type="match status" value="1"/>
</dbReference>
<dbReference type="Pfam" id="PF04167">
    <property type="entry name" value="DUF402"/>
    <property type="match status" value="1"/>
</dbReference>
<dbReference type="Pfam" id="PF10150">
    <property type="entry name" value="RNase_E_G"/>
    <property type="match status" value="1"/>
</dbReference>
<dbReference type="SUPFAM" id="SSF159234">
    <property type="entry name" value="FomD-like"/>
    <property type="match status" value="1"/>
</dbReference>
<gene>
    <name evidence="1" type="primary">fau-1</name>
    <name type="ordered locus">Smar_0627</name>
</gene>
<keyword id="KW-0255">Endonuclease</keyword>
<keyword id="KW-0378">Hydrolase</keyword>
<keyword id="KW-0540">Nuclease</keyword>
<keyword id="KW-1185">Reference proteome</keyword>
<keyword id="KW-0694">RNA-binding</keyword>
<keyword id="KW-0698">rRNA processing</keyword>
<accession>A3DM74</accession>
<evidence type="ECO:0000255" key="1">
    <source>
        <dbReference type="HAMAP-Rule" id="MF_01910"/>
    </source>
</evidence>
<name>FAU1_STAMF</name>
<protein>
    <recommendedName>
        <fullName evidence="1">Probable ribonuclease FAU-1</fullName>
        <ecNumber evidence="1">3.1.26.-</ecNumber>
    </recommendedName>
    <alternativeName>
        <fullName evidence="1">RNA-binding protein FAU-1</fullName>
    </alternativeName>
</protein>
<reference key="1">
    <citation type="journal article" date="2009" name="BMC Genomics">
        <title>The complete genome sequence of Staphylothermus marinus reveals differences in sulfur metabolism among heterotrophic Crenarchaeota.</title>
        <authorList>
            <person name="Anderson I.J."/>
            <person name="Dharmarajan L."/>
            <person name="Rodriguez J."/>
            <person name="Hooper S."/>
            <person name="Porat I."/>
            <person name="Ulrich L.E."/>
            <person name="Elkins J.G."/>
            <person name="Mavromatis K."/>
            <person name="Sun H."/>
            <person name="Land M."/>
            <person name="Lapidus A."/>
            <person name="Lucas S."/>
            <person name="Barry K."/>
            <person name="Huber H."/>
            <person name="Zhulin I.B."/>
            <person name="Whitman W.B."/>
            <person name="Mukhopadhyay B."/>
            <person name="Woese C."/>
            <person name="Bristow J."/>
            <person name="Kyrpides N."/>
        </authorList>
    </citation>
    <scope>NUCLEOTIDE SEQUENCE [LARGE SCALE GENOMIC DNA]</scope>
    <source>
        <strain>ATCC 43588 / DSM 3639 / JCM 9404 / F1</strain>
    </source>
</reference>
<reference key="2">
    <citation type="journal article" date="2009" name="Stand. Genomic Sci.">
        <title>Complete genome sequence of Staphylothermus marinus Stetter and Fiala 1986 type strain F1.</title>
        <authorList>
            <person name="Anderson I.J."/>
            <person name="Sun H."/>
            <person name="Lapidus A."/>
            <person name="Copeland A."/>
            <person name="Glavina Del Rio T."/>
            <person name="Tice H."/>
            <person name="Dalin E."/>
            <person name="Lucas S."/>
            <person name="Barry K."/>
            <person name="Land M."/>
            <person name="Richardson P."/>
            <person name="Huber H."/>
            <person name="Kyrpides N.C."/>
        </authorList>
    </citation>
    <scope>NUCLEOTIDE SEQUENCE [LARGE SCALE GENOMIC DNA]</scope>
    <source>
        <strain>ATCC 43588 / DSM 3639 / JCM 9404 / F1</strain>
    </source>
</reference>
<organism>
    <name type="scientific">Staphylothermus marinus (strain ATCC 43588 / DSM 3639 / JCM 9404 / F1)</name>
    <dbReference type="NCBI Taxonomy" id="399550"/>
    <lineage>
        <taxon>Archaea</taxon>
        <taxon>Thermoproteota</taxon>
        <taxon>Thermoprotei</taxon>
        <taxon>Desulfurococcales</taxon>
        <taxon>Desulfurococcaceae</taxon>
        <taxon>Staphylothermus</taxon>
    </lineage>
</organism>
<proteinExistence type="inferred from homology"/>
<comment type="function">
    <text evidence="1">Probable RNase involved in rRNA stability through maturation and/or degradation of precursor rRNAs. Binds to RNA in loop regions with AU-rich sequences.</text>
</comment>
<comment type="similarity">
    <text evidence="1">Belongs to the FAU-1 family.</text>
</comment>